<feature type="chain" id="PRO_0000201262" description="Cardiolipin synthase A">
    <location>
        <begin position="1"/>
        <end position="481"/>
    </location>
</feature>
<feature type="transmembrane region" description="Helical" evidence="1">
    <location>
        <begin position="10"/>
        <end position="30"/>
    </location>
</feature>
<feature type="transmembrane region" description="Helical" evidence="1">
    <location>
        <begin position="40"/>
        <end position="60"/>
    </location>
</feature>
<feature type="domain" description="PLD phosphodiesterase 1" evidence="1">
    <location>
        <begin position="220"/>
        <end position="247"/>
    </location>
</feature>
<feature type="domain" description="PLD phosphodiesterase 2" evidence="1">
    <location>
        <begin position="394"/>
        <end position="421"/>
    </location>
</feature>
<feature type="active site" evidence="1">
    <location>
        <position position="225"/>
    </location>
</feature>
<feature type="active site" evidence="1">
    <location>
        <position position="227"/>
    </location>
</feature>
<feature type="active site" evidence="1">
    <location>
        <position position="232"/>
    </location>
</feature>
<feature type="active site" evidence="1">
    <location>
        <position position="399"/>
    </location>
</feature>
<feature type="active site" evidence="1">
    <location>
        <position position="401"/>
    </location>
</feature>
<feature type="active site" evidence="1">
    <location>
        <position position="406"/>
    </location>
</feature>
<keyword id="KW-0997">Cell inner membrane</keyword>
<keyword id="KW-1003">Cell membrane</keyword>
<keyword id="KW-0444">Lipid biosynthesis</keyword>
<keyword id="KW-0443">Lipid metabolism</keyword>
<keyword id="KW-0472">Membrane</keyword>
<keyword id="KW-0594">Phospholipid biosynthesis</keyword>
<keyword id="KW-1208">Phospholipid metabolism</keyword>
<keyword id="KW-1185">Reference proteome</keyword>
<keyword id="KW-0677">Repeat</keyword>
<keyword id="KW-0808">Transferase</keyword>
<keyword id="KW-0812">Transmembrane</keyword>
<keyword id="KW-1133">Transmembrane helix</keyword>
<accession>Q88C19</accession>
<name>CLSA_PSEPK</name>
<proteinExistence type="inferred from homology"/>
<gene>
    <name evidence="1" type="primary">clsA</name>
    <name type="synonym">cls</name>
    <name type="ordered locus">PP_5364</name>
</gene>
<organism>
    <name type="scientific">Pseudomonas putida (strain ATCC 47054 / DSM 6125 / CFBP 8728 / NCIMB 11950 / KT2440)</name>
    <dbReference type="NCBI Taxonomy" id="160488"/>
    <lineage>
        <taxon>Bacteria</taxon>
        <taxon>Pseudomonadati</taxon>
        <taxon>Pseudomonadota</taxon>
        <taxon>Gammaproteobacteria</taxon>
        <taxon>Pseudomonadales</taxon>
        <taxon>Pseudomonadaceae</taxon>
        <taxon>Pseudomonas</taxon>
    </lineage>
</organism>
<comment type="function">
    <text evidence="1">Catalyzes the reversible phosphatidyl group transfer from one phosphatidylglycerol molecule to another to form cardiolipin (CL) (diphosphatidylglycerol) and glycerol.</text>
</comment>
<comment type="catalytic activity">
    <reaction evidence="1">
        <text>2 a 1,2-diacyl-sn-glycero-3-phospho-(1'-sn-glycerol) = a cardiolipin + glycerol</text>
        <dbReference type="Rhea" id="RHEA:31451"/>
        <dbReference type="ChEBI" id="CHEBI:17754"/>
        <dbReference type="ChEBI" id="CHEBI:62237"/>
        <dbReference type="ChEBI" id="CHEBI:64716"/>
    </reaction>
</comment>
<comment type="subcellular location">
    <subcellularLocation>
        <location evidence="1">Cell inner membrane</location>
        <topology evidence="1">Multi-pass membrane protein</topology>
    </subcellularLocation>
</comment>
<comment type="similarity">
    <text evidence="1">Belongs to the phospholipase D family. Cardiolipin synthase subfamily. ClsA sub-subfamily.</text>
</comment>
<reference key="1">
    <citation type="journal article" date="2002" name="Environ. Microbiol.">
        <title>Complete genome sequence and comparative analysis of the metabolically versatile Pseudomonas putida KT2440.</title>
        <authorList>
            <person name="Nelson K.E."/>
            <person name="Weinel C."/>
            <person name="Paulsen I.T."/>
            <person name="Dodson R.J."/>
            <person name="Hilbert H."/>
            <person name="Martins dos Santos V.A.P."/>
            <person name="Fouts D.E."/>
            <person name="Gill S.R."/>
            <person name="Pop M."/>
            <person name="Holmes M."/>
            <person name="Brinkac L.M."/>
            <person name="Beanan M.J."/>
            <person name="DeBoy R.T."/>
            <person name="Daugherty S.C."/>
            <person name="Kolonay J.F."/>
            <person name="Madupu R."/>
            <person name="Nelson W.C."/>
            <person name="White O."/>
            <person name="Peterson J.D."/>
            <person name="Khouri H.M."/>
            <person name="Hance I."/>
            <person name="Chris Lee P."/>
            <person name="Holtzapple E.K."/>
            <person name="Scanlan D."/>
            <person name="Tran K."/>
            <person name="Moazzez A."/>
            <person name="Utterback T.R."/>
            <person name="Rizzo M."/>
            <person name="Lee K."/>
            <person name="Kosack D."/>
            <person name="Moestl D."/>
            <person name="Wedler H."/>
            <person name="Lauber J."/>
            <person name="Stjepandic D."/>
            <person name="Hoheisel J."/>
            <person name="Straetz M."/>
            <person name="Heim S."/>
            <person name="Kiewitz C."/>
            <person name="Eisen J.A."/>
            <person name="Timmis K.N."/>
            <person name="Duesterhoeft A."/>
            <person name="Tuemmler B."/>
            <person name="Fraser C.M."/>
        </authorList>
    </citation>
    <scope>NUCLEOTIDE SEQUENCE [LARGE SCALE GENOMIC DNA]</scope>
    <source>
        <strain>ATCC 47054 / DSM 6125 / CFBP 8728 / NCIMB 11950 / KT2440</strain>
    </source>
</reference>
<sequence length="481" mass="54374">MHMDYHSPYFFGYLLGLIHLLGIVAALHALFTVRTAQGAIAWAMPLLFIPYLTLIPYLIFGARSFYAYIKARRQANQEMHVAMANLNWRPWVEEALTARESESYTALRAMPKLGRMPCLANNQVKLLINGKATFDAIFAAIEKARDVVLVQFFIIHDDTLGKALQQLLLRKAAEGVQVFVLYDRVGSHALPSSYSQVLRDGGVQIHAFATRRGWFNRFQVNFRNHRKIVVVDGLLGFIGGHNVGDEYLGEHPQLSPWRDTHVQISGPVLACLQESFAEDWYWATRQLPPLILPDTYPDNGVLCQALASGPADPQETCSLFFLEAIHSATRRVWITSPYFIPDEAVFAALRLAVLRGVDVRVLIPSRPDHRIVYAASSLFAFEAVRAGVRMFRYQPGFLHQKVVLVDDDVSAIGSANLDNRSFRLNFEITLLTVDRGFADQVEHMLQEDFEQAREITAEDTQDTHRLQQLGMRIARLISPIL</sequence>
<dbReference type="EC" id="2.7.8.-" evidence="1"/>
<dbReference type="EMBL" id="AE015451">
    <property type="protein sequence ID" value="AAN70929.1"/>
    <property type="molecule type" value="Genomic_DNA"/>
</dbReference>
<dbReference type="RefSeq" id="NP_747465.1">
    <property type="nucleotide sequence ID" value="NC_002947.4"/>
</dbReference>
<dbReference type="SMR" id="Q88C19"/>
<dbReference type="STRING" id="160488.PP_5364"/>
<dbReference type="PaxDb" id="160488-PP_5364"/>
<dbReference type="KEGG" id="ppu:PP_5364"/>
<dbReference type="PATRIC" id="fig|160488.4.peg.5719"/>
<dbReference type="eggNOG" id="COG1502">
    <property type="taxonomic scope" value="Bacteria"/>
</dbReference>
<dbReference type="HOGENOM" id="CLU_038053_1_0_6"/>
<dbReference type="OrthoDB" id="9762009at2"/>
<dbReference type="PhylomeDB" id="Q88C19"/>
<dbReference type="BioCyc" id="PPUT160488:G1G01-5720-MONOMER"/>
<dbReference type="Proteomes" id="UP000000556">
    <property type="component" value="Chromosome"/>
</dbReference>
<dbReference type="GO" id="GO:0005886">
    <property type="term" value="C:plasma membrane"/>
    <property type="evidence" value="ECO:0007669"/>
    <property type="project" value="UniProtKB-SubCell"/>
</dbReference>
<dbReference type="GO" id="GO:0008808">
    <property type="term" value="F:cardiolipin synthase activity"/>
    <property type="evidence" value="ECO:0007669"/>
    <property type="project" value="InterPro"/>
</dbReference>
<dbReference type="GO" id="GO:0032049">
    <property type="term" value="P:cardiolipin biosynthetic process"/>
    <property type="evidence" value="ECO:0007669"/>
    <property type="project" value="InterPro"/>
</dbReference>
<dbReference type="CDD" id="cd09155">
    <property type="entry name" value="PLDc_PaCLS_like_1"/>
    <property type="match status" value="1"/>
</dbReference>
<dbReference type="CDD" id="cd09161">
    <property type="entry name" value="PLDc_PaCLS_like_2"/>
    <property type="match status" value="1"/>
</dbReference>
<dbReference type="FunFam" id="3.30.870.10:FF:000014">
    <property type="entry name" value="Cardiolipin synthase"/>
    <property type="match status" value="1"/>
</dbReference>
<dbReference type="FunFam" id="3.30.870.10:FF:000021">
    <property type="entry name" value="Cardiolipin synthase"/>
    <property type="match status" value="1"/>
</dbReference>
<dbReference type="Gene3D" id="3.30.870.10">
    <property type="entry name" value="Endonuclease Chain A"/>
    <property type="match status" value="2"/>
</dbReference>
<dbReference type="HAMAP" id="MF_00190">
    <property type="entry name" value="Cardiolipin_synth_ClsA"/>
    <property type="match status" value="1"/>
</dbReference>
<dbReference type="InterPro" id="IPR022924">
    <property type="entry name" value="Cardiolipin_synthase"/>
</dbReference>
<dbReference type="InterPro" id="IPR030840">
    <property type="entry name" value="CL_synthase_A"/>
</dbReference>
<dbReference type="InterPro" id="IPR027379">
    <property type="entry name" value="CLS_N"/>
</dbReference>
<dbReference type="InterPro" id="IPR025202">
    <property type="entry name" value="PLD-like_dom"/>
</dbReference>
<dbReference type="InterPro" id="IPR001736">
    <property type="entry name" value="PLipase_D/transphosphatidylase"/>
</dbReference>
<dbReference type="NCBIfam" id="TIGR04265">
    <property type="entry name" value="bac_cardiolipin"/>
    <property type="match status" value="1"/>
</dbReference>
<dbReference type="PANTHER" id="PTHR21248">
    <property type="entry name" value="CARDIOLIPIN SYNTHASE"/>
    <property type="match status" value="1"/>
</dbReference>
<dbReference type="PANTHER" id="PTHR21248:SF22">
    <property type="entry name" value="PHOSPHOLIPASE D"/>
    <property type="match status" value="1"/>
</dbReference>
<dbReference type="Pfam" id="PF13091">
    <property type="entry name" value="PLDc_2"/>
    <property type="match status" value="2"/>
</dbReference>
<dbReference type="Pfam" id="PF13396">
    <property type="entry name" value="PLDc_N"/>
    <property type="match status" value="1"/>
</dbReference>
<dbReference type="SMART" id="SM00155">
    <property type="entry name" value="PLDc"/>
    <property type="match status" value="2"/>
</dbReference>
<dbReference type="SUPFAM" id="SSF56024">
    <property type="entry name" value="Phospholipase D/nuclease"/>
    <property type="match status" value="2"/>
</dbReference>
<dbReference type="PROSITE" id="PS50035">
    <property type="entry name" value="PLD"/>
    <property type="match status" value="2"/>
</dbReference>
<protein>
    <recommendedName>
        <fullName evidence="1">Cardiolipin synthase A</fullName>
        <shortName evidence="1">CL synthase</shortName>
        <ecNumber evidence="1">2.7.8.-</ecNumber>
    </recommendedName>
</protein>
<evidence type="ECO:0000255" key="1">
    <source>
        <dbReference type="HAMAP-Rule" id="MF_00190"/>
    </source>
</evidence>